<comment type="miscellaneous">
    <text>Despite the presence of the tlyC gene, the true SFG rickettsiae are non-hemolytic.</text>
</comment>
<comment type="similarity">
    <text evidence="2">Belongs to the UPF0053 family. Hemolysin C subfamily.</text>
</comment>
<comment type="sequence caution" evidence="2">
    <conflict type="erroneous initiation">
        <sequence resource="EMBL-CDS" id="ABV85157"/>
    </conflict>
</comment>
<feature type="chain" id="PRO_0000319032" description="Hemolysin C homolog">
    <location>
        <begin position="1"/>
        <end position="299"/>
    </location>
</feature>
<feature type="domain" description="CBS 1" evidence="1">
    <location>
        <begin position="80"/>
        <end position="142"/>
    </location>
</feature>
<feature type="domain" description="CBS 2" evidence="1">
    <location>
        <begin position="145"/>
        <end position="202"/>
    </location>
</feature>
<proteinExistence type="inferred from homology"/>
<evidence type="ECO:0000255" key="1">
    <source>
        <dbReference type="PROSITE-ProRule" id="PRU00703"/>
    </source>
</evidence>
<evidence type="ECO:0000305" key="2"/>
<accession>A8F2M1</accession>
<keyword id="KW-0129">CBS domain</keyword>
<keyword id="KW-0677">Repeat</keyword>
<sequence>MLKSSKKEDSSKKNQNNKLIFTVRKLFSPIKNFFRKTKTPDNFFGVIKRLKINSQKMTLDERNILANLLELEYKTIEDIMVPRSDIAAIKLTTNLEELSESIKLEVPHTRTLIYDGTLDNVVGFIHIKDLFKALATKQNGRLKKLIRKHIIAAPSMKLLDLLAKMRRERTHIAIVVDEYGGTDGLVTIEDLIEEIVGRIDDEHDQQLDSDNFKVINNSTIISNARVEVEVLEEIIGEKLQNDDDEFDTIGGLVLTRVSSVPAIGTRIDISENIEIEVTDATPRSLKQVKIRLKNGLNGK</sequence>
<organism>
    <name type="scientific">Rickettsia massiliae (strain Mtu5)</name>
    <dbReference type="NCBI Taxonomy" id="416276"/>
    <lineage>
        <taxon>Bacteria</taxon>
        <taxon>Pseudomonadati</taxon>
        <taxon>Pseudomonadota</taxon>
        <taxon>Alphaproteobacteria</taxon>
        <taxon>Rickettsiales</taxon>
        <taxon>Rickettsiaceae</taxon>
        <taxon>Rickettsieae</taxon>
        <taxon>Rickettsia</taxon>
        <taxon>spotted fever group</taxon>
    </lineage>
</organism>
<protein>
    <recommendedName>
        <fullName>Hemolysin C homolog</fullName>
    </recommendedName>
</protein>
<name>HLYC_RICM5</name>
<gene>
    <name type="primary">tlyC</name>
    <name type="ordered locus">RMA_1168</name>
</gene>
<reference key="1">
    <citation type="journal article" date="2007" name="Genome Res.">
        <title>Lateral gene transfer between obligate intracellular bacteria: evidence from the Rickettsia massiliae genome.</title>
        <authorList>
            <person name="Blanc G."/>
            <person name="Ogata H."/>
            <person name="Robert C."/>
            <person name="Audic S."/>
            <person name="Claverie J.-M."/>
            <person name="Raoult D."/>
        </authorList>
    </citation>
    <scope>NUCLEOTIDE SEQUENCE [LARGE SCALE GENOMIC DNA]</scope>
    <source>
        <strain>Mtu5</strain>
    </source>
</reference>
<dbReference type="EMBL" id="CP000683">
    <property type="protein sequence ID" value="ABV85157.1"/>
    <property type="status" value="ALT_INIT"/>
    <property type="molecule type" value="Genomic_DNA"/>
</dbReference>
<dbReference type="RefSeq" id="WP_014365448.1">
    <property type="nucleotide sequence ID" value="NC_009900.1"/>
</dbReference>
<dbReference type="SMR" id="A8F2M1"/>
<dbReference type="KEGG" id="rms:RMA_1168"/>
<dbReference type="HOGENOM" id="CLU_015237_3_1_5"/>
<dbReference type="Proteomes" id="UP000001311">
    <property type="component" value="Chromosome"/>
</dbReference>
<dbReference type="GO" id="GO:0005886">
    <property type="term" value="C:plasma membrane"/>
    <property type="evidence" value="ECO:0007669"/>
    <property type="project" value="TreeGrafter"/>
</dbReference>
<dbReference type="GO" id="GO:0050660">
    <property type="term" value="F:flavin adenine dinucleotide binding"/>
    <property type="evidence" value="ECO:0007669"/>
    <property type="project" value="InterPro"/>
</dbReference>
<dbReference type="CDD" id="cd04590">
    <property type="entry name" value="CBS_pair_CorC_HlyC_assoc"/>
    <property type="match status" value="1"/>
</dbReference>
<dbReference type="FunFam" id="3.10.580.10:FF:000002">
    <property type="entry name" value="Magnesium/cobalt efflux protein CorC"/>
    <property type="match status" value="1"/>
</dbReference>
<dbReference type="Gene3D" id="3.30.465.10">
    <property type="match status" value="1"/>
</dbReference>
<dbReference type="Gene3D" id="3.10.580.10">
    <property type="entry name" value="CBS-domain"/>
    <property type="match status" value="1"/>
</dbReference>
<dbReference type="InterPro" id="IPR000644">
    <property type="entry name" value="CBS_dom"/>
</dbReference>
<dbReference type="InterPro" id="IPR046342">
    <property type="entry name" value="CBS_dom_sf"/>
</dbReference>
<dbReference type="InterPro" id="IPR036318">
    <property type="entry name" value="FAD-bd_PCMH-like_sf"/>
</dbReference>
<dbReference type="InterPro" id="IPR016169">
    <property type="entry name" value="FAD-bd_PCMH_sub2"/>
</dbReference>
<dbReference type="InterPro" id="IPR044751">
    <property type="entry name" value="Ion_transp-like_CBS"/>
</dbReference>
<dbReference type="InterPro" id="IPR005170">
    <property type="entry name" value="Transptr-assoc_dom"/>
</dbReference>
<dbReference type="PANTHER" id="PTHR22777">
    <property type="entry name" value="HEMOLYSIN-RELATED"/>
    <property type="match status" value="1"/>
</dbReference>
<dbReference type="PANTHER" id="PTHR22777:SF27">
    <property type="entry name" value="MAGNESIUM AND COBALT EFFLUX PROTEIN CORC"/>
    <property type="match status" value="1"/>
</dbReference>
<dbReference type="Pfam" id="PF00571">
    <property type="entry name" value="CBS"/>
    <property type="match status" value="1"/>
</dbReference>
<dbReference type="Pfam" id="PF03471">
    <property type="entry name" value="CorC_HlyC"/>
    <property type="match status" value="1"/>
</dbReference>
<dbReference type="SMART" id="SM01091">
    <property type="entry name" value="CorC_HlyC"/>
    <property type="match status" value="1"/>
</dbReference>
<dbReference type="SUPFAM" id="SSF54631">
    <property type="entry name" value="CBS-domain pair"/>
    <property type="match status" value="1"/>
</dbReference>
<dbReference type="SUPFAM" id="SSF56176">
    <property type="entry name" value="FAD-binding/transporter-associated domain-like"/>
    <property type="match status" value="1"/>
</dbReference>
<dbReference type="PROSITE" id="PS51371">
    <property type="entry name" value="CBS"/>
    <property type="match status" value="2"/>
</dbReference>